<gene>
    <name evidence="4 9" type="primary">IGKV1D-43</name>
</gene>
<organism>
    <name type="scientific">Homo sapiens</name>
    <name type="common">Human</name>
    <dbReference type="NCBI Taxonomy" id="9606"/>
    <lineage>
        <taxon>Eukaryota</taxon>
        <taxon>Metazoa</taxon>
        <taxon>Chordata</taxon>
        <taxon>Craniata</taxon>
        <taxon>Vertebrata</taxon>
        <taxon>Euteleostomi</taxon>
        <taxon>Mammalia</taxon>
        <taxon>Eutheria</taxon>
        <taxon>Euarchontoglires</taxon>
        <taxon>Primates</taxon>
        <taxon>Haplorrhini</taxon>
        <taxon>Catarrhini</taxon>
        <taxon>Hominidae</taxon>
        <taxon>Homo</taxon>
    </lineage>
</organism>
<protein>
    <recommendedName>
        <fullName evidence="4 9">Immunoglobulin kappa variable 1D-43</fullName>
    </recommendedName>
</protein>
<feature type="signal peptide" evidence="2">
    <location>
        <begin position="1"/>
        <end position="22"/>
    </location>
</feature>
<feature type="chain" id="PRO_5002092602" description="Immunoglobulin kappa variable 1D-43" evidence="2">
    <location>
        <begin position="23"/>
        <end position="117"/>
    </location>
</feature>
<feature type="domain" description="Ig-like" evidence="3">
    <location>
        <begin position="23"/>
        <end position="117" status="greater than"/>
    </location>
</feature>
<feature type="region of interest" description="Framework-1" evidence="1">
    <location>
        <begin position="23"/>
        <end position="45"/>
    </location>
</feature>
<feature type="region of interest" description="Complementarity-determining-1" evidence="1">
    <location>
        <begin position="46"/>
        <end position="56"/>
    </location>
</feature>
<feature type="region of interest" description="Framework-2" evidence="1">
    <location>
        <begin position="57"/>
        <end position="71"/>
    </location>
</feature>
<feature type="region of interest" description="Complementarity-determining-2" evidence="1">
    <location>
        <begin position="72"/>
        <end position="78"/>
    </location>
</feature>
<feature type="region of interest" description="Framework-3" evidence="1">
    <location>
        <begin position="79"/>
        <end position="110"/>
    </location>
</feature>
<feature type="region of interest" description="Complementarity-determining-3" evidence="1">
    <location>
        <begin position="111"/>
        <end position="117" status="greater than"/>
    </location>
</feature>
<feature type="disulfide bond" evidence="3">
    <location>
        <begin position="45"/>
        <end position="110"/>
    </location>
</feature>
<feature type="non-terminal residue">
    <location>
        <position position="117"/>
    </location>
</feature>
<sequence length="117" mass="12989">MDMRVPAQRLGLLLLWFPGARCAIRMTQSPFSLSASVGDRVTITCWASQGISSYLAWYQQKPAKAPKLFIYYASSLQSGVPSRFSGSGSGTDYTLTISSLQPEDFATYYCQQYYSTP</sequence>
<reference key="1">
    <citation type="journal article" date="2005" name="Nature">
        <title>Generation and annotation of the DNA sequences of human chromosomes 2 and 4.</title>
        <authorList>
            <person name="Hillier L.W."/>
            <person name="Graves T.A."/>
            <person name="Fulton R.S."/>
            <person name="Fulton L.A."/>
            <person name="Pepin K.H."/>
            <person name="Minx P."/>
            <person name="Wagner-McPherson C."/>
            <person name="Layman D."/>
            <person name="Wylie K."/>
            <person name="Sekhon M."/>
            <person name="Becker M.C."/>
            <person name="Fewell G.A."/>
            <person name="Delehaunty K.D."/>
            <person name="Miner T.L."/>
            <person name="Nash W.E."/>
            <person name="Kremitzki C."/>
            <person name="Oddy L."/>
            <person name="Du H."/>
            <person name="Sun H."/>
            <person name="Bradshaw-Cordum H."/>
            <person name="Ali J."/>
            <person name="Carter J."/>
            <person name="Cordes M."/>
            <person name="Harris A."/>
            <person name="Isak A."/>
            <person name="van Brunt A."/>
            <person name="Nguyen C."/>
            <person name="Du F."/>
            <person name="Courtney L."/>
            <person name="Kalicki J."/>
            <person name="Ozersky P."/>
            <person name="Abbott S."/>
            <person name="Armstrong J."/>
            <person name="Belter E.A."/>
            <person name="Caruso L."/>
            <person name="Cedroni M."/>
            <person name="Cotton M."/>
            <person name="Davidson T."/>
            <person name="Desai A."/>
            <person name="Elliott G."/>
            <person name="Erb T."/>
            <person name="Fronick C."/>
            <person name="Gaige T."/>
            <person name="Haakenson W."/>
            <person name="Haglund K."/>
            <person name="Holmes A."/>
            <person name="Harkins R."/>
            <person name="Kim K."/>
            <person name="Kruchowski S.S."/>
            <person name="Strong C.M."/>
            <person name="Grewal N."/>
            <person name="Goyea E."/>
            <person name="Hou S."/>
            <person name="Levy A."/>
            <person name="Martinka S."/>
            <person name="Mead K."/>
            <person name="McLellan M.D."/>
            <person name="Meyer R."/>
            <person name="Randall-Maher J."/>
            <person name="Tomlinson C."/>
            <person name="Dauphin-Kohlberg S."/>
            <person name="Kozlowicz-Reilly A."/>
            <person name="Shah N."/>
            <person name="Swearengen-Shahid S."/>
            <person name="Snider J."/>
            <person name="Strong J.T."/>
            <person name="Thompson J."/>
            <person name="Yoakum M."/>
            <person name="Leonard S."/>
            <person name="Pearman C."/>
            <person name="Trani L."/>
            <person name="Radionenko M."/>
            <person name="Waligorski J.E."/>
            <person name="Wang C."/>
            <person name="Rock S.M."/>
            <person name="Tin-Wollam A.-M."/>
            <person name="Maupin R."/>
            <person name="Latreille P."/>
            <person name="Wendl M.C."/>
            <person name="Yang S.-P."/>
            <person name="Pohl C."/>
            <person name="Wallis J.W."/>
            <person name="Spieth J."/>
            <person name="Bieri T.A."/>
            <person name="Berkowicz N."/>
            <person name="Nelson J.O."/>
            <person name="Osborne J."/>
            <person name="Ding L."/>
            <person name="Meyer R."/>
            <person name="Sabo A."/>
            <person name="Shotland Y."/>
            <person name="Sinha P."/>
            <person name="Wohldmann P.E."/>
            <person name="Cook L.L."/>
            <person name="Hickenbotham M.T."/>
            <person name="Eldred J."/>
            <person name="Williams D."/>
            <person name="Jones T.A."/>
            <person name="She X."/>
            <person name="Ciccarelli F.D."/>
            <person name="Izaurralde E."/>
            <person name="Taylor J."/>
            <person name="Schmutz J."/>
            <person name="Myers R.M."/>
            <person name="Cox D.R."/>
            <person name="Huang X."/>
            <person name="McPherson J.D."/>
            <person name="Mardis E.R."/>
            <person name="Clifton S.W."/>
            <person name="Warren W.C."/>
            <person name="Chinwalla A.T."/>
            <person name="Eddy S.R."/>
            <person name="Marra M.A."/>
            <person name="Ovcharenko I."/>
            <person name="Furey T.S."/>
            <person name="Miller W."/>
            <person name="Eichler E.E."/>
            <person name="Bork P."/>
            <person name="Suyama M."/>
            <person name="Torrents D."/>
            <person name="Waterston R.H."/>
            <person name="Wilson R.K."/>
        </authorList>
    </citation>
    <scope>NUCLEOTIDE SEQUENCE [LARGE SCALE GENOMIC DNA] (IMGT ALLELE IGKV1D-43*01)</scope>
</reference>
<reference key="2">
    <citation type="journal article" date="2001" name="Exp. Clin. Immunogenet.">
        <title>Nomenclature of the human immunoglobulin kappa (IGK) genes.</title>
        <authorList>
            <person name="Lefranc M.P."/>
        </authorList>
    </citation>
    <scope>NOMEMCLATURE</scope>
</reference>
<reference key="3">
    <citation type="book" date="2001" name="The Immunoglobulin FactsBook.">
        <title>The Immunoglobulin FactsBook.</title>
        <editorList>
            <person name="Lefranc M.P."/>
            <person name="Lefranc G."/>
        </editorList>
        <authorList>
            <person name="Lefranc M.P."/>
            <person name="Lefranc G."/>
        </authorList>
    </citation>
    <scope>NOMENCLATURE</scope>
</reference>
<reference key="4">
    <citation type="journal article" date="2007" name="Annu. Rev. Genet.">
        <title>Immunoglobulin somatic hypermutation.</title>
        <authorList>
            <person name="Teng G."/>
            <person name="Papavasiliou F.N."/>
        </authorList>
    </citation>
    <scope>REVIEW ON SOMATIC HYPERMUTATION</scope>
</reference>
<reference key="5">
    <citation type="journal article" date="2010" name="J. Allergy Clin. Immunol.">
        <title>Structure and function of immunoglobulins.</title>
        <authorList>
            <person name="Schroeder H.W. Jr."/>
            <person name="Cavacini L."/>
        </authorList>
    </citation>
    <scope>REVIEW ON IMMUNOGLOBULINS</scope>
</reference>
<reference key="6">
    <citation type="journal article" date="2012" name="Nat. Rev. Immunol.">
        <title>Molecular programming of B cell memory.</title>
        <authorList>
            <person name="McHeyzer-Williams M."/>
            <person name="Okitsu S."/>
            <person name="Wang N."/>
            <person name="McHeyzer-Williams L."/>
        </authorList>
    </citation>
    <scope>REVIEW ON FUNCTION</scope>
</reference>
<reference key="7">
    <citation type="journal article" date="2014" name="Front. Immunol.">
        <title>Immunoglobulin and T Cell Receptor Genes: IMGT((R)) and the Birth and Rise of Immunoinformatics.</title>
        <authorList>
            <person name="Lefranc M.P."/>
        </authorList>
    </citation>
    <scope>NOMENCLATURE</scope>
</reference>
<evidence type="ECO:0000250" key="1">
    <source>
        <dbReference type="UniProtKB" id="P01602"/>
    </source>
</evidence>
<evidence type="ECO:0000255" key="2"/>
<evidence type="ECO:0000255" key="3">
    <source>
        <dbReference type="PROSITE-ProRule" id="PRU00114"/>
    </source>
</evidence>
<evidence type="ECO:0000303" key="4">
    <source>
    </source>
</evidence>
<evidence type="ECO:0000303" key="5">
    <source>
    </source>
</evidence>
<evidence type="ECO:0000303" key="6">
    <source>
    </source>
</evidence>
<evidence type="ECO:0000303" key="7">
    <source>
    </source>
</evidence>
<evidence type="ECO:0000303" key="8">
    <source>
    </source>
</evidence>
<evidence type="ECO:0000303" key="9">
    <source ref="3"/>
</evidence>
<evidence type="ECO:0000305" key="10"/>
<accession>A0A0B4J1Z2</accession>
<comment type="function">
    <text evidence="5 6 7 8">V region of the variable domain of immunoglobulin light chains that participates in the antigen recognition (PubMed:24600447). Immunoglobulins, also known as antibodies, are membrane-bound or secreted glycoproteins produced by B lymphocytes. In the recognition phase of humoral immunity, the membrane-bound immunoglobulins serve as receptors which, upon binding of a specific antigen, trigger the clonal expansion and differentiation of B lymphocytes into immunoglobulins-secreting plasma cells. Secreted immunoglobulins mediate the effector phase of humoral immunity, which results in the elimination of bound antigens (PubMed:20176268, PubMed:22158414). The antigen binding site is formed by the variable domain of one heavy chain, together with that of its associated light chain. Thus, each immunoglobulin has two antigen binding sites with remarkable affinity for a particular antigen. The variable domains are assembled by a process called V-(D)-J rearrangement and can then be subjected to somatic hypermutations which, after exposure to antigen and selection, allow affinity maturation for a particular antigen (PubMed:17576170, PubMed:20176268).</text>
</comment>
<comment type="subunit">
    <text evidence="6">Immunoglobulins are composed of two identical heavy chains and two identical light chains; disulfide-linked.</text>
</comment>
<comment type="subcellular location">
    <subcellularLocation>
        <location evidence="6 7">Secreted</location>
    </subcellularLocation>
    <subcellularLocation>
        <location evidence="6 7">Cell membrane</location>
    </subcellularLocation>
</comment>
<comment type="polymorphism">
    <text>There are several alleles. The sequence shown is that of IMGT allele IGKV1D-43*01.</text>
</comment>
<comment type="caution">
    <text evidence="10">For an example of a full-length immunoglobulin kappa light chain see AC P0DOX7.</text>
</comment>
<name>KVD43_HUMAN</name>
<proteinExistence type="evidence at protein level"/>
<keyword id="KW-1064">Adaptive immunity</keyword>
<keyword id="KW-1003">Cell membrane</keyword>
<keyword id="KW-1015">Disulfide bond</keyword>
<keyword id="KW-0391">Immunity</keyword>
<keyword id="KW-1280">Immunoglobulin</keyword>
<keyword id="KW-0393">Immunoglobulin domain</keyword>
<keyword id="KW-0472">Membrane</keyword>
<keyword id="KW-1267">Proteomics identification</keyword>
<keyword id="KW-1185">Reference proteome</keyword>
<keyword id="KW-0964">Secreted</keyword>
<keyword id="KW-0732">Signal</keyword>
<dbReference type="EMBL" id="AC243981">
    <property type="status" value="NOT_ANNOTATED_CDS"/>
    <property type="molecule type" value="Genomic_DNA"/>
</dbReference>
<dbReference type="SMR" id="A0A0B4J1Z2"/>
<dbReference type="FunCoup" id="A0A0B4J1Z2">
    <property type="interactions" value="312"/>
</dbReference>
<dbReference type="IMGT_GENE-DB" id="IGKV1D-43"/>
<dbReference type="BioMuta" id="IGKV1D-43"/>
<dbReference type="MassIVE" id="A0A0B4J1Z2"/>
<dbReference type="Ensembl" id="ENST00000468879.1">
    <property type="protein sequence ID" value="ENSP00000417961.1"/>
    <property type="gene ID" value="ENSG00000242580.1"/>
</dbReference>
<dbReference type="AGR" id="HGNC:5758"/>
<dbReference type="GeneCards" id="IGKV1D-43"/>
<dbReference type="HGNC" id="HGNC:5758">
    <property type="gene designation" value="IGKV1D-43"/>
</dbReference>
<dbReference type="HPA" id="ENSG00000242580">
    <property type="expression patterns" value="Tissue enhanced (intestine, lymphoid tissue, stomach)"/>
</dbReference>
<dbReference type="neXtProt" id="NX_A0A0B4J1Z2"/>
<dbReference type="VEuPathDB" id="HostDB:ENSG00000242580"/>
<dbReference type="GeneTree" id="ENSGT00940000153048"/>
<dbReference type="HOGENOM" id="CLU_077975_4_1_1"/>
<dbReference type="InParanoid" id="A0A0B4J1Z2"/>
<dbReference type="OMA" id="YRISTRQ"/>
<dbReference type="OrthoDB" id="9629570at2759"/>
<dbReference type="PAN-GO" id="A0A0B4J1Z2">
    <property type="GO annotations" value="3 GO annotations based on evolutionary models"/>
</dbReference>
<dbReference type="PhylomeDB" id="A0A0B4J1Z2"/>
<dbReference type="SignaLink" id="A0A0B4J1Z2"/>
<dbReference type="Pharos" id="A0A0B4J1Z2">
    <property type="development level" value="Tdark"/>
</dbReference>
<dbReference type="PRO" id="PR:A0A0B4J1Z2"/>
<dbReference type="Proteomes" id="UP000005640">
    <property type="component" value="Chromosome 2"/>
</dbReference>
<dbReference type="RNAct" id="A0A0B4J1Z2">
    <property type="molecule type" value="protein"/>
</dbReference>
<dbReference type="Bgee" id="ENSG00000242580">
    <property type="expression patterns" value="Expressed in lymph node and 65 other cell types or tissues"/>
</dbReference>
<dbReference type="GO" id="GO:0005576">
    <property type="term" value="C:extracellular region"/>
    <property type="evidence" value="ECO:0007669"/>
    <property type="project" value="UniProtKB-SubCell"/>
</dbReference>
<dbReference type="GO" id="GO:0019814">
    <property type="term" value="C:immunoglobulin complex"/>
    <property type="evidence" value="ECO:0000318"/>
    <property type="project" value="GO_Central"/>
</dbReference>
<dbReference type="GO" id="GO:0005886">
    <property type="term" value="C:plasma membrane"/>
    <property type="evidence" value="ECO:0007669"/>
    <property type="project" value="UniProtKB-SubCell"/>
</dbReference>
<dbReference type="GO" id="GO:0002250">
    <property type="term" value="P:adaptive immune response"/>
    <property type="evidence" value="ECO:0007669"/>
    <property type="project" value="UniProtKB-KW"/>
</dbReference>
<dbReference type="GO" id="GO:0006955">
    <property type="term" value="P:immune response"/>
    <property type="evidence" value="ECO:0000318"/>
    <property type="project" value="GO_Central"/>
</dbReference>
<dbReference type="CDD" id="cd04980">
    <property type="entry name" value="IgV_L_kappa"/>
    <property type="match status" value="1"/>
</dbReference>
<dbReference type="FunFam" id="2.60.40.10:FF:000212">
    <property type="entry name" value="Immunoglobulin kappa chain variable 12-38"/>
    <property type="match status" value="1"/>
</dbReference>
<dbReference type="Gene3D" id="2.60.40.10">
    <property type="entry name" value="Immunoglobulins"/>
    <property type="match status" value="1"/>
</dbReference>
<dbReference type="InterPro" id="IPR007110">
    <property type="entry name" value="Ig-like_dom"/>
</dbReference>
<dbReference type="InterPro" id="IPR036179">
    <property type="entry name" value="Ig-like_dom_sf"/>
</dbReference>
<dbReference type="InterPro" id="IPR013783">
    <property type="entry name" value="Ig-like_fold"/>
</dbReference>
<dbReference type="InterPro" id="IPR003599">
    <property type="entry name" value="Ig_sub"/>
</dbReference>
<dbReference type="InterPro" id="IPR013106">
    <property type="entry name" value="Ig_V-set"/>
</dbReference>
<dbReference type="InterPro" id="IPR050150">
    <property type="entry name" value="IgV_Light_Chain"/>
</dbReference>
<dbReference type="PANTHER" id="PTHR23267">
    <property type="entry name" value="IMMUNOGLOBULIN LIGHT CHAIN"/>
    <property type="match status" value="1"/>
</dbReference>
<dbReference type="Pfam" id="PF07686">
    <property type="entry name" value="V-set"/>
    <property type="match status" value="1"/>
</dbReference>
<dbReference type="SMART" id="SM00409">
    <property type="entry name" value="IG"/>
    <property type="match status" value="1"/>
</dbReference>
<dbReference type="SMART" id="SM00406">
    <property type="entry name" value="IGv"/>
    <property type="match status" value="1"/>
</dbReference>
<dbReference type="SUPFAM" id="SSF48726">
    <property type="entry name" value="Immunoglobulin"/>
    <property type="match status" value="1"/>
</dbReference>
<dbReference type="PROSITE" id="PS50835">
    <property type="entry name" value="IG_LIKE"/>
    <property type="match status" value="1"/>
</dbReference>